<keyword id="KW-0963">Cytoplasm</keyword>
<keyword id="KW-0448">Lipopolysaccharide biosynthesis</keyword>
<keyword id="KW-0548">Nucleotidyltransferase</keyword>
<keyword id="KW-0808">Transferase</keyword>
<comment type="function">
    <text evidence="1">Activates KDO (a required 8-carbon sugar) for incorporation into bacterial lipopolysaccharide in Gram-negative bacteria.</text>
</comment>
<comment type="catalytic activity">
    <reaction evidence="1">
        <text>3-deoxy-alpha-D-manno-oct-2-ulosonate + CTP = CMP-3-deoxy-beta-D-manno-octulosonate + diphosphate</text>
        <dbReference type="Rhea" id="RHEA:23448"/>
        <dbReference type="ChEBI" id="CHEBI:33019"/>
        <dbReference type="ChEBI" id="CHEBI:37563"/>
        <dbReference type="ChEBI" id="CHEBI:85986"/>
        <dbReference type="ChEBI" id="CHEBI:85987"/>
        <dbReference type="EC" id="2.7.7.38"/>
    </reaction>
</comment>
<comment type="pathway">
    <text evidence="1">Nucleotide-sugar biosynthesis; CMP-3-deoxy-D-manno-octulosonate biosynthesis; CMP-3-deoxy-D-manno-octulosonate from 3-deoxy-D-manno-octulosonate and CTP: step 1/1.</text>
</comment>
<comment type="pathway">
    <text evidence="1">Bacterial outer membrane biogenesis; lipopolysaccharide biosynthesis.</text>
</comment>
<comment type="subcellular location">
    <subcellularLocation>
        <location evidence="1">Cytoplasm</location>
    </subcellularLocation>
</comment>
<comment type="similarity">
    <text evidence="1">Belongs to the KdsB family.</text>
</comment>
<sequence length="248" mass="27727">MMKKILGVIPARYASSRFPGKPLAKIGDKTMIEWTYRNASRSSVLSELVVATDDVRIHEVVQKFGGRSVMTSSDHPSGTDRIIEVANQFSEYSIIVNIQGDEPGIEPELIDGVASLKASHPEWAMSTAAVPLLDFSHAIDFNRVKVIIDRNGKAIYFSRSLIPSQFKTTVPLYRHLGIYGYDRDFLLQYNSLPKSNLEESESLEQLRAIEAGYGIGIYLSKEAGLSVDTPADLEIVIEDFKKRKWISE</sequence>
<reference key="1">
    <citation type="journal article" date="2004" name="J. Bacteriol.">
        <title>Comparative genomics of two Leptospira interrogans serovars reveals novel insights into physiology and pathogenesis.</title>
        <authorList>
            <person name="Nascimento A.L.T.O."/>
            <person name="Ko A.I."/>
            <person name="Martins E.A.L."/>
            <person name="Monteiro-Vitorello C.B."/>
            <person name="Ho P.L."/>
            <person name="Haake D.A."/>
            <person name="Verjovski-Almeida S."/>
            <person name="Hartskeerl R.A."/>
            <person name="Marques M.V."/>
            <person name="Oliveira M.C."/>
            <person name="Menck C.F.M."/>
            <person name="Leite L.C.C."/>
            <person name="Carrer H."/>
            <person name="Coutinho L.L."/>
            <person name="Degrave W.M."/>
            <person name="Dellagostin O.A."/>
            <person name="El-Dorry H."/>
            <person name="Ferro E.S."/>
            <person name="Ferro M.I.T."/>
            <person name="Furlan L.R."/>
            <person name="Gamberini M."/>
            <person name="Giglioti E.A."/>
            <person name="Goes-Neto A."/>
            <person name="Goldman G.H."/>
            <person name="Goldman M.H.S."/>
            <person name="Harakava R."/>
            <person name="Jeronimo S.M.B."/>
            <person name="Junqueira-de-Azevedo I.L.M."/>
            <person name="Kimura E.T."/>
            <person name="Kuramae E.E."/>
            <person name="Lemos E.G.M."/>
            <person name="Lemos M.V.F."/>
            <person name="Marino C.L."/>
            <person name="Nunes L.R."/>
            <person name="de Oliveira R.C."/>
            <person name="Pereira G.G."/>
            <person name="Reis M.S."/>
            <person name="Schriefer A."/>
            <person name="Siqueira W.J."/>
            <person name="Sommer P."/>
            <person name="Tsai S.M."/>
            <person name="Simpson A.J.G."/>
            <person name="Ferro J.A."/>
            <person name="Camargo L.E.A."/>
            <person name="Kitajima J.P."/>
            <person name="Setubal J.C."/>
            <person name="Van Sluys M.A."/>
        </authorList>
    </citation>
    <scope>NUCLEOTIDE SEQUENCE [LARGE SCALE GENOMIC DNA]</scope>
    <source>
        <strain>Fiocruz L1-130</strain>
    </source>
</reference>
<organism>
    <name type="scientific">Leptospira interrogans serogroup Icterohaemorrhagiae serovar copenhageni (strain Fiocruz L1-130)</name>
    <dbReference type="NCBI Taxonomy" id="267671"/>
    <lineage>
        <taxon>Bacteria</taxon>
        <taxon>Pseudomonadati</taxon>
        <taxon>Spirochaetota</taxon>
        <taxon>Spirochaetia</taxon>
        <taxon>Leptospirales</taxon>
        <taxon>Leptospiraceae</taxon>
        <taxon>Leptospira</taxon>
    </lineage>
</organism>
<dbReference type="EC" id="2.7.7.38" evidence="1"/>
<dbReference type="EMBL" id="AE016823">
    <property type="protein sequence ID" value="AAS69246.1"/>
    <property type="molecule type" value="Genomic_DNA"/>
</dbReference>
<dbReference type="SMR" id="Q72UN2"/>
<dbReference type="KEGG" id="lic:LIC_10625"/>
<dbReference type="HOGENOM" id="CLU_065038_0_1_12"/>
<dbReference type="UniPathway" id="UPA00030"/>
<dbReference type="UniPathway" id="UPA00358">
    <property type="reaction ID" value="UER00476"/>
</dbReference>
<dbReference type="Proteomes" id="UP000007037">
    <property type="component" value="Chromosome I"/>
</dbReference>
<dbReference type="GO" id="GO:0005829">
    <property type="term" value="C:cytosol"/>
    <property type="evidence" value="ECO:0007669"/>
    <property type="project" value="TreeGrafter"/>
</dbReference>
<dbReference type="GO" id="GO:0008690">
    <property type="term" value="F:3-deoxy-manno-octulosonate cytidylyltransferase activity"/>
    <property type="evidence" value="ECO:0007669"/>
    <property type="project" value="UniProtKB-UniRule"/>
</dbReference>
<dbReference type="GO" id="GO:0033468">
    <property type="term" value="P:CMP-keto-3-deoxy-D-manno-octulosonic acid biosynthetic process"/>
    <property type="evidence" value="ECO:0007669"/>
    <property type="project" value="UniProtKB-UniRule"/>
</dbReference>
<dbReference type="GO" id="GO:0009103">
    <property type="term" value="P:lipopolysaccharide biosynthetic process"/>
    <property type="evidence" value="ECO:0007669"/>
    <property type="project" value="UniProtKB-UniRule"/>
</dbReference>
<dbReference type="CDD" id="cd02517">
    <property type="entry name" value="CMP-KDO-Synthetase"/>
    <property type="match status" value="1"/>
</dbReference>
<dbReference type="FunFam" id="3.90.550.10:FF:000011">
    <property type="entry name" value="3-deoxy-manno-octulosonate cytidylyltransferase"/>
    <property type="match status" value="1"/>
</dbReference>
<dbReference type="Gene3D" id="3.90.550.10">
    <property type="entry name" value="Spore Coat Polysaccharide Biosynthesis Protein SpsA, Chain A"/>
    <property type="match status" value="1"/>
</dbReference>
<dbReference type="HAMAP" id="MF_00057">
    <property type="entry name" value="KdsB"/>
    <property type="match status" value="1"/>
</dbReference>
<dbReference type="InterPro" id="IPR003329">
    <property type="entry name" value="Cytidylyl_trans"/>
</dbReference>
<dbReference type="InterPro" id="IPR004528">
    <property type="entry name" value="KdsB"/>
</dbReference>
<dbReference type="InterPro" id="IPR029044">
    <property type="entry name" value="Nucleotide-diphossugar_trans"/>
</dbReference>
<dbReference type="NCBIfam" id="TIGR00466">
    <property type="entry name" value="kdsB"/>
    <property type="match status" value="1"/>
</dbReference>
<dbReference type="NCBIfam" id="NF003950">
    <property type="entry name" value="PRK05450.1-3"/>
    <property type="match status" value="1"/>
</dbReference>
<dbReference type="NCBIfam" id="NF003952">
    <property type="entry name" value="PRK05450.1-5"/>
    <property type="match status" value="1"/>
</dbReference>
<dbReference type="NCBIfam" id="NF009905">
    <property type="entry name" value="PRK13368.1"/>
    <property type="match status" value="1"/>
</dbReference>
<dbReference type="PANTHER" id="PTHR42866">
    <property type="entry name" value="3-DEOXY-MANNO-OCTULOSONATE CYTIDYLYLTRANSFERASE"/>
    <property type="match status" value="1"/>
</dbReference>
<dbReference type="PANTHER" id="PTHR42866:SF2">
    <property type="entry name" value="3-DEOXY-MANNO-OCTULOSONATE CYTIDYLYLTRANSFERASE, MITOCHONDRIAL"/>
    <property type="match status" value="1"/>
</dbReference>
<dbReference type="Pfam" id="PF02348">
    <property type="entry name" value="CTP_transf_3"/>
    <property type="match status" value="1"/>
</dbReference>
<dbReference type="SUPFAM" id="SSF53448">
    <property type="entry name" value="Nucleotide-diphospho-sugar transferases"/>
    <property type="match status" value="1"/>
</dbReference>
<protein>
    <recommendedName>
        <fullName evidence="1">3-deoxy-manno-octulosonate cytidylyltransferase</fullName>
        <ecNumber evidence="1">2.7.7.38</ecNumber>
    </recommendedName>
    <alternativeName>
        <fullName evidence="1">CMP-2-keto-3-deoxyoctulosonic acid synthase</fullName>
        <shortName evidence="1">CKS</shortName>
        <shortName evidence="1">CMP-KDO synthase</shortName>
    </alternativeName>
</protein>
<name>KDSB_LEPIC</name>
<gene>
    <name evidence="1" type="primary">kdsB</name>
    <name type="ordered locus">LIC_10625</name>
</gene>
<evidence type="ECO:0000255" key="1">
    <source>
        <dbReference type="HAMAP-Rule" id="MF_00057"/>
    </source>
</evidence>
<accession>Q72UN2</accession>
<feature type="chain" id="PRO_0000370088" description="3-deoxy-manno-octulosonate cytidylyltransferase">
    <location>
        <begin position="1"/>
        <end position="248"/>
    </location>
</feature>
<proteinExistence type="inferred from homology"/>